<proteinExistence type="inferred from homology"/>
<comment type="function">
    <text evidence="1">NDH-1 shuttles electrons from an unknown electron donor, via FMN and iron-sulfur (Fe-S) centers, to quinones in the respiratory and/or the photosynthetic chain. The immediate electron acceptor for the enzyme in this species is believed to be plastoquinone. Couples the redox reaction to proton translocation, and thus conserves the redox energy in a proton gradient.</text>
</comment>
<comment type="catalytic activity">
    <reaction evidence="1">
        <text>a plastoquinone + NADH + (n+1) H(+)(in) = a plastoquinol + NAD(+) + n H(+)(out)</text>
        <dbReference type="Rhea" id="RHEA:42608"/>
        <dbReference type="Rhea" id="RHEA-COMP:9561"/>
        <dbReference type="Rhea" id="RHEA-COMP:9562"/>
        <dbReference type="ChEBI" id="CHEBI:15378"/>
        <dbReference type="ChEBI" id="CHEBI:17757"/>
        <dbReference type="ChEBI" id="CHEBI:57540"/>
        <dbReference type="ChEBI" id="CHEBI:57945"/>
        <dbReference type="ChEBI" id="CHEBI:62192"/>
    </reaction>
</comment>
<comment type="catalytic activity">
    <reaction evidence="1">
        <text>a plastoquinone + NADPH + (n+1) H(+)(in) = a plastoquinol + NADP(+) + n H(+)(out)</text>
        <dbReference type="Rhea" id="RHEA:42612"/>
        <dbReference type="Rhea" id="RHEA-COMP:9561"/>
        <dbReference type="Rhea" id="RHEA-COMP:9562"/>
        <dbReference type="ChEBI" id="CHEBI:15378"/>
        <dbReference type="ChEBI" id="CHEBI:17757"/>
        <dbReference type="ChEBI" id="CHEBI:57783"/>
        <dbReference type="ChEBI" id="CHEBI:58349"/>
        <dbReference type="ChEBI" id="CHEBI:62192"/>
    </reaction>
</comment>
<comment type="cofactor">
    <cofactor evidence="1">
        <name>[4Fe-4S] cluster</name>
        <dbReference type="ChEBI" id="CHEBI:49883"/>
    </cofactor>
    <text evidence="1">Binds 2 [4Fe-4S] clusters per subunit.</text>
</comment>
<comment type="subunit">
    <text evidence="1">NDH-1 is composed of at least 11 different subunits.</text>
</comment>
<comment type="subcellular location">
    <subcellularLocation>
        <location evidence="1">Cellular thylakoid membrane</location>
        <topology evidence="1">Peripheral membrane protein</topology>
    </subcellularLocation>
</comment>
<comment type="similarity">
    <text evidence="1">Belongs to the complex I 23 kDa subunit family.</text>
</comment>
<reference key="1">
    <citation type="journal article" date="2007" name="PLoS Genet.">
        <title>Patterns and implications of gene gain and loss in the evolution of Prochlorococcus.</title>
        <authorList>
            <person name="Kettler G.C."/>
            <person name="Martiny A.C."/>
            <person name="Huang K."/>
            <person name="Zucker J."/>
            <person name="Coleman M.L."/>
            <person name="Rodrigue S."/>
            <person name="Chen F."/>
            <person name="Lapidus A."/>
            <person name="Ferriera S."/>
            <person name="Johnson J."/>
            <person name="Steglich C."/>
            <person name="Church G.M."/>
            <person name="Richardson P."/>
            <person name="Chisholm S.W."/>
        </authorList>
    </citation>
    <scope>NUCLEOTIDE SEQUENCE [LARGE SCALE GENOMIC DNA]</scope>
    <source>
        <strain>NATL2A</strain>
    </source>
</reference>
<dbReference type="EC" id="7.1.1.-" evidence="1"/>
<dbReference type="EMBL" id="CP000095">
    <property type="protein sequence ID" value="AAZ59014.1"/>
    <property type="molecule type" value="Genomic_DNA"/>
</dbReference>
<dbReference type="RefSeq" id="WP_011294159.1">
    <property type="nucleotide sequence ID" value="NC_007335.2"/>
</dbReference>
<dbReference type="SMR" id="Q46HL4"/>
<dbReference type="STRING" id="59920.PMN2A_1526"/>
<dbReference type="KEGG" id="pmn:PMN2A_1526"/>
<dbReference type="HOGENOM" id="CLU_122804_0_0_3"/>
<dbReference type="OrthoDB" id="9798098at2"/>
<dbReference type="PhylomeDB" id="Q46HL4"/>
<dbReference type="Proteomes" id="UP000002535">
    <property type="component" value="Chromosome"/>
</dbReference>
<dbReference type="GO" id="GO:0031676">
    <property type="term" value="C:plasma membrane-derived thylakoid membrane"/>
    <property type="evidence" value="ECO:0007669"/>
    <property type="project" value="UniProtKB-SubCell"/>
</dbReference>
<dbReference type="GO" id="GO:0051539">
    <property type="term" value="F:4 iron, 4 sulfur cluster binding"/>
    <property type="evidence" value="ECO:0007669"/>
    <property type="project" value="UniProtKB-KW"/>
</dbReference>
<dbReference type="GO" id="GO:0005506">
    <property type="term" value="F:iron ion binding"/>
    <property type="evidence" value="ECO:0007669"/>
    <property type="project" value="UniProtKB-UniRule"/>
</dbReference>
<dbReference type="GO" id="GO:0008137">
    <property type="term" value="F:NADH dehydrogenase (ubiquinone) activity"/>
    <property type="evidence" value="ECO:0007669"/>
    <property type="project" value="InterPro"/>
</dbReference>
<dbReference type="GO" id="GO:0048038">
    <property type="term" value="F:quinone binding"/>
    <property type="evidence" value="ECO:0007669"/>
    <property type="project" value="UniProtKB-KW"/>
</dbReference>
<dbReference type="GO" id="GO:0019684">
    <property type="term" value="P:photosynthesis, light reaction"/>
    <property type="evidence" value="ECO:0007669"/>
    <property type="project" value="UniProtKB-UniRule"/>
</dbReference>
<dbReference type="Gene3D" id="3.30.70.3270">
    <property type="match status" value="1"/>
</dbReference>
<dbReference type="HAMAP" id="MF_01351">
    <property type="entry name" value="NDH1_NuoI"/>
    <property type="match status" value="1"/>
</dbReference>
<dbReference type="InterPro" id="IPR017896">
    <property type="entry name" value="4Fe4S_Fe-S-bd"/>
</dbReference>
<dbReference type="InterPro" id="IPR017900">
    <property type="entry name" value="4Fe4S_Fe_S_CS"/>
</dbReference>
<dbReference type="InterPro" id="IPR010226">
    <property type="entry name" value="NADH_quinone_OxRdtase_chainI"/>
</dbReference>
<dbReference type="InterPro" id="IPR004497">
    <property type="entry name" value="NDHI"/>
</dbReference>
<dbReference type="NCBIfam" id="TIGR00403">
    <property type="entry name" value="ndhI"/>
    <property type="match status" value="1"/>
</dbReference>
<dbReference type="NCBIfam" id="TIGR01971">
    <property type="entry name" value="NuoI"/>
    <property type="match status" value="1"/>
</dbReference>
<dbReference type="NCBIfam" id="NF004537">
    <property type="entry name" value="PRK05888.1-3"/>
    <property type="match status" value="1"/>
</dbReference>
<dbReference type="PANTHER" id="PTHR47275">
    <property type="entry name" value="NAD(P)H-QUINONE OXIDOREDUCTASE SUBUNIT I, CHLOROPLASTIC"/>
    <property type="match status" value="1"/>
</dbReference>
<dbReference type="PANTHER" id="PTHR47275:SF1">
    <property type="entry name" value="NAD(P)H-QUINONE OXIDOREDUCTASE SUBUNIT I, CHLOROPLASTIC"/>
    <property type="match status" value="1"/>
</dbReference>
<dbReference type="Pfam" id="PF12838">
    <property type="entry name" value="Fer4_7"/>
    <property type="match status" value="1"/>
</dbReference>
<dbReference type="SUPFAM" id="SSF54862">
    <property type="entry name" value="4Fe-4S ferredoxins"/>
    <property type="match status" value="1"/>
</dbReference>
<dbReference type="PROSITE" id="PS00198">
    <property type="entry name" value="4FE4S_FER_1"/>
    <property type="match status" value="2"/>
</dbReference>
<dbReference type="PROSITE" id="PS51379">
    <property type="entry name" value="4FE4S_FER_2"/>
    <property type="match status" value="2"/>
</dbReference>
<protein>
    <recommendedName>
        <fullName evidence="1">NAD(P)H-quinone oxidoreductase subunit I</fullName>
        <ecNumber evidence="1">7.1.1.-</ecNumber>
    </recommendedName>
    <alternativeName>
        <fullName evidence="1">NAD(P)H dehydrogenase I subunit I</fullName>
    </alternativeName>
    <alternativeName>
        <fullName evidence="1">NDH-1 subunit I</fullName>
        <shortName evidence="1">NDH-I</shortName>
    </alternativeName>
</protein>
<feature type="chain" id="PRO_0000245686" description="NAD(P)H-quinone oxidoreductase subunit I">
    <location>
        <begin position="1"/>
        <end position="218"/>
    </location>
</feature>
<feature type="domain" description="4Fe-4S ferredoxin-type 1" evidence="1">
    <location>
        <begin position="55"/>
        <end position="84"/>
    </location>
</feature>
<feature type="domain" description="4Fe-4S ferredoxin-type 2" evidence="1">
    <location>
        <begin position="95"/>
        <end position="124"/>
    </location>
</feature>
<feature type="region of interest" description="Disordered" evidence="2">
    <location>
        <begin position="179"/>
        <end position="218"/>
    </location>
</feature>
<feature type="compositionally biased region" description="Basic and acidic residues" evidence="2">
    <location>
        <begin position="192"/>
        <end position="202"/>
    </location>
</feature>
<feature type="compositionally biased region" description="Polar residues" evidence="2">
    <location>
        <begin position="203"/>
        <end position="218"/>
    </location>
</feature>
<feature type="binding site" evidence="1">
    <location>
        <position position="64"/>
    </location>
    <ligand>
        <name>[4Fe-4S] cluster</name>
        <dbReference type="ChEBI" id="CHEBI:49883"/>
        <label>1</label>
    </ligand>
</feature>
<feature type="binding site" evidence="1">
    <location>
        <position position="67"/>
    </location>
    <ligand>
        <name>[4Fe-4S] cluster</name>
        <dbReference type="ChEBI" id="CHEBI:49883"/>
        <label>1</label>
    </ligand>
</feature>
<feature type="binding site" evidence="1">
    <location>
        <position position="70"/>
    </location>
    <ligand>
        <name>[4Fe-4S] cluster</name>
        <dbReference type="ChEBI" id="CHEBI:49883"/>
        <label>1</label>
    </ligand>
</feature>
<feature type="binding site" evidence="1">
    <location>
        <position position="74"/>
    </location>
    <ligand>
        <name>[4Fe-4S] cluster</name>
        <dbReference type="ChEBI" id="CHEBI:49883"/>
        <label>2</label>
    </ligand>
</feature>
<feature type="binding site" evidence="1">
    <location>
        <position position="104"/>
    </location>
    <ligand>
        <name>[4Fe-4S] cluster</name>
        <dbReference type="ChEBI" id="CHEBI:49883"/>
        <label>2</label>
    </ligand>
</feature>
<feature type="binding site" evidence="1">
    <location>
        <position position="107"/>
    </location>
    <ligand>
        <name>[4Fe-4S] cluster</name>
        <dbReference type="ChEBI" id="CHEBI:49883"/>
        <label>2</label>
    </ligand>
</feature>
<feature type="binding site" evidence="1">
    <location>
        <position position="110"/>
    </location>
    <ligand>
        <name>[4Fe-4S] cluster</name>
        <dbReference type="ChEBI" id="CHEBI:49883"/>
        <label>2</label>
    </ligand>
</feature>
<feature type="binding site" evidence="1">
    <location>
        <position position="114"/>
    </location>
    <ligand>
        <name>[4Fe-4S] cluster</name>
        <dbReference type="ChEBI" id="CHEBI:49883"/>
        <label>1</label>
    </ligand>
</feature>
<gene>
    <name evidence="1" type="primary">ndhI</name>
    <name type="ordered locus">PMN2A_1526</name>
</gene>
<accession>Q46HL4</accession>
<evidence type="ECO:0000255" key="1">
    <source>
        <dbReference type="HAMAP-Rule" id="MF_01351"/>
    </source>
</evidence>
<evidence type="ECO:0000256" key="2">
    <source>
        <dbReference type="SAM" id="MobiDB-lite"/>
    </source>
</evidence>
<name>NDHI_PROMT</name>
<keyword id="KW-0004">4Fe-4S</keyword>
<keyword id="KW-0408">Iron</keyword>
<keyword id="KW-0411">Iron-sulfur</keyword>
<keyword id="KW-0472">Membrane</keyword>
<keyword id="KW-0479">Metal-binding</keyword>
<keyword id="KW-0520">NAD</keyword>
<keyword id="KW-0521">NADP</keyword>
<keyword id="KW-0618">Plastoquinone</keyword>
<keyword id="KW-0874">Quinone</keyword>
<keyword id="KW-1185">Reference proteome</keyword>
<keyword id="KW-0677">Repeat</keyword>
<keyword id="KW-0793">Thylakoid</keyword>
<keyword id="KW-1278">Translocase</keyword>
<organism>
    <name type="scientific">Prochlorococcus marinus (strain NATL2A)</name>
    <dbReference type="NCBI Taxonomy" id="59920"/>
    <lineage>
        <taxon>Bacteria</taxon>
        <taxon>Bacillati</taxon>
        <taxon>Cyanobacteriota</taxon>
        <taxon>Cyanophyceae</taxon>
        <taxon>Synechococcales</taxon>
        <taxon>Prochlorococcaceae</taxon>
        <taxon>Prochlorococcus</taxon>
    </lineage>
</organism>
<sequence length="218" mass="24833">MLGFLEKVADYTKEAVSAAKYLVDGLGVTFDHMRRRPVTVQYPYEKLIPSERYRGRIHYEFDKCIACEVCVRVCPINLPVVDWVMNKETKKKELRNYSIDFGACIFCGNCVEYCPTNCLSMTEEYELSAFDRHSLNYDNVALGRLPTSVTSDPSVRPLRELPYLPKGIMDPHELPANQLRAGKLPSQIIKELQADKSEEEGKNNSSDMVPNKLNSTNK</sequence>